<proteinExistence type="inferred from homology"/>
<organism>
    <name type="scientific">Neurospora crassa (strain ATCC 24698 / 74-OR23-1A / CBS 708.71 / DSM 1257 / FGSC 987)</name>
    <dbReference type="NCBI Taxonomy" id="367110"/>
    <lineage>
        <taxon>Eukaryota</taxon>
        <taxon>Fungi</taxon>
        <taxon>Dikarya</taxon>
        <taxon>Ascomycota</taxon>
        <taxon>Pezizomycotina</taxon>
        <taxon>Sordariomycetes</taxon>
        <taxon>Sordariomycetidae</taxon>
        <taxon>Sordariales</taxon>
        <taxon>Sordariaceae</taxon>
        <taxon>Neurospora</taxon>
    </lineage>
</organism>
<accession>P53444</accession>
<accession>A7UX41</accession>
<accession>Q7S1C1</accession>
<accession>V5IKX9</accession>
<gene>
    <name type="primary">fba</name>
    <name type="ORF">NCU07807</name>
</gene>
<protein>
    <recommendedName>
        <fullName>Fructose-bisphosphate aldolase</fullName>
        <shortName>FBP aldolase</shortName>
        <shortName>FBPA</shortName>
        <ecNumber>4.1.2.13</ecNumber>
    </recommendedName>
    <alternativeName>
        <fullName>Fructose-1,6-bisphosphate aldolase</fullName>
    </alternativeName>
</protein>
<keyword id="KW-0324">Glycolysis</keyword>
<keyword id="KW-0456">Lyase</keyword>
<keyword id="KW-0479">Metal-binding</keyword>
<keyword id="KW-1185">Reference proteome</keyword>
<keyword id="KW-0862">Zinc</keyword>
<sequence>MGIFDELNLPAGVLYGDDVLKLFQYAREKQFAIPACNVTSSSTAVAALEAARDQKAPIILQTSQGGAAFFAGKGIKDSAEKREASVAGAIAAAHYIRSIAPIYGIPVVLHTDHCAKKLLPWLDGMLEEDEKFFKANGVPLFSSHMIDLSEEPVEENISTCVKYLKRMAPMKQWLEMEIGITGGEEDGVDNSEVDNASLYTQPEDIWQIEEAFRPISPYFSIAAGFGNVHGVYAPGNVKLHPELLGKHQAYVSEKLGGKDKKPVFFVFHGGSGSSKEEYREAISNGVVKVNVDTDLQWSYLVGIRDYILNNIDYLRSQVGNPEGPNKPNKKKYDPRVWIREGEKTMKARVEEALKDFNAAGTV</sequence>
<name>ALF_NEUCR</name>
<reference key="1">
    <citation type="submission" date="1995-05" db="EMBL/GenBank/DDBJ databases">
        <title>DNA sequence of fructose-1,6-bisphosphate aldolase in N. crassa.</title>
        <authorList>
            <person name="Yamashita R."/>
            <person name="Stuart W.D."/>
        </authorList>
    </citation>
    <scope>NUCLEOTIDE SEQUENCE [GENOMIC DNA]</scope>
    <source>
        <strain>74A</strain>
    </source>
</reference>
<reference key="2">
    <citation type="journal article" date="2003" name="Nature">
        <title>The genome sequence of the filamentous fungus Neurospora crassa.</title>
        <authorList>
            <person name="Galagan J.E."/>
            <person name="Calvo S.E."/>
            <person name="Borkovich K.A."/>
            <person name="Selker E.U."/>
            <person name="Read N.D."/>
            <person name="Jaffe D.B."/>
            <person name="FitzHugh W."/>
            <person name="Ma L.-J."/>
            <person name="Smirnov S."/>
            <person name="Purcell S."/>
            <person name="Rehman B."/>
            <person name="Elkins T."/>
            <person name="Engels R."/>
            <person name="Wang S."/>
            <person name="Nielsen C.B."/>
            <person name="Butler J."/>
            <person name="Endrizzi M."/>
            <person name="Qui D."/>
            <person name="Ianakiev P."/>
            <person name="Bell-Pedersen D."/>
            <person name="Nelson M.A."/>
            <person name="Werner-Washburne M."/>
            <person name="Selitrennikoff C.P."/>
            <person name="Kinsey J.A."/>
            <person name="Braun E.L."/>
            <person name="Zelter A."/>
            <person name="Schulte U."/>
            <person name="Kothe G.O."/>
            <person name="Jedd G."/>
            <person name="Mewes H.-W."/>
            <person name="Staben C."/>
            <person name="Marcotte E."/>
            <person name="Greenberg D."/>
            <person name="Roy A."/>
            <person name="Foley K."/>
            <person name="Naylor J."/>
            <person name="Stange-Thomann N."/>
            <person name="Barrett R."/>
            <person name="Gnerre S."/>
            <person name="Kamal M."/>
            <person name="Kamvysselis M."/>
            <person name="Mauceli E.W."/>
            <person name="Bielke C."/>
            <person name="Rudd S."/>
            <person name="Frishman D."/>
            <person name="Krystofova S."/>
            <person name="Rasmussen C."/>
            <person name="Metzenberg R.L."/>
            <person name="Perkins D.D."/>
            <person name="Kroken S."/>
            <person name="Cogoni C."/>
            <person name="Macino G."/>
            <person name="Catcheside D.E.A."/>
            <person name="Li W."/>
            <person name="Pratt R.J."/>
            <person name="Osmani S.A."/>
            <person name="DeSouza C.P.C."/>
            <person name="Glass N.L."/>
            <person name="Orbach M.J."/>
            <person name="Berglund J.A."/>
            <person name="Voelker R."/>
            <person name="Yarden O."/>
            <person name="Plamann M."/>
            <person name="Seiler S."/>
            <person name="Dunlap J.C."/>
            <person name="Radford A."/>
            <person name="Aramayo R."/>
            <person name="Natvig D.O."/>
            <person name="Alex L.A."/>
            <person name="Mannhaupt G."/>
            <person name="Ebbole D.J."/>
            <person name="Freitag M."/>
            <person name="Paulsen I."/>
            <person name="Sachs M.S."/>
            <person name="Lander E.S."/>
            <person name="Nusbaum C."/>
            <person name="Birren B.W."/>
        </authorList>
    </citation>
    <scope>NUCLEOTIDE SEQUENCE [LARGE SCALE GENOMIC DNA]</scope>
    <source>
        <strain>ATCC 24698 / 74-OR23-1A / CBS 708.71 / DSM 1257 / FGSC 987</strain>
    </source>
</reference>
<comment type="function">
    <text evidence="1">Catalyzes the aldol condensation of dihydroxyacetone phosphate (DHAP or glycerone-phosphate) with glyceraldehyde 3-phosphate (G3P) to form fructose 1,6-bisphosphate (FBP) in gluconeogenesis and the reverse reaction in glycolysis.</text>
</comment>
<comment type="catalytic activity">
    <reaction>
        <text>beta-D-fructose 1,6-bisphosphate = D-glyceraldehyde 3-phosphate + dihydroxyacetone phosphate</text>
        <dbReference type="Rhea" id="RHEA:14729"/>
        <dbReference type="ChEBI" id="CHEBI:32966"/>
        <dbReference type="ChEBI" id="CHEBI:57642"/>
        <dbReference type="ChEBI" id="CHEBI:59776"/>
        <dbReference type="EC" id="4.1.2.13"/>
    </reaction>
</comment>
<comment type="cofactor">
    <cofactor evidence="1">
        <name>Zn(2+)</name>
        <dbReference type="ChEBI" id="CHEBI:29105"/>
    </cofactor>
    <text evidence="1">Binds 2 Zn(2+) ions per subunit. One is catalytic and the other provides a structural contribution.</text>
</comment>
<comment type="pathway">
    <text>Carbohydrate degradation; glycolysis; D-glyceraldehyde 3-phosphate and glycerone phosphate from D-glucose: step 4/4.</text>
</comment>
<comment type="subunit">
    <text evidence="1">Homodimer.</text>
</comment>
<comment type="similarity">
    <text evidence="2">Belongs to the class II fructose-bisphosphate aldolase family.</text>
</comment>
<dbReference type="EC" id="4.1.2.13"/>
<dbReference type="EMBL" id="L42380">
    <property type="protein sequence ID" value="AAB00930.1"/>
    <property type="molecule type" value="Genomic_DNA"/>
</dbReference>
<dbReference type="EMBL" id="CM002240">
    <property type="protein sequence ID" value="ESA42348.1"/>
    <property type="molecule type" value="Genomic_DNA"/>
</dbReference>
<dbReference type="EMBL" id="CM002240">
    <property type="protein sequence ID" value="ESA42349.1"/>
    <property type="molecule type" value="Genomic_DNA"/>
</dbReference>
<dbReference type="PIR" id="T47260">
    <property type="entry name" value="T47260"/>
</dbReference>
<dbReference type="RefSeq" id="XP_011394728.1">
    <property type="nucleotide sequence ID" value="XM_011396426.1"/>
</dbReference>
<dbReference type="RefSeq" id="XP_011394729.1">
    <property type="nucleotide sequence ID" value="XM_011396427.1"/>
</dbReference>
<dbReference type="SMR" id="P53444"/>
<dbReference type="FunCoup" id="P53444">
    <property type="interactions" value="656"/>
</dbReference>
<dbReference type="STRING" id="367110.P53444"/>
<dbReference type="PaxDb" id="5141-EFNCRP00000007989"/>
<dbReference type="EnsemblFungi" id="ESA42348">
    <property type="protein sequence ID" value="ESA42348"/>
    <property type="gene ID" value="NCU07807"/>
</dbReference>
<dbReference type="EnsemblFungi" id="ESA42349">
    <property type="protein sequence ID" value="ESA42349"/>
    <property type="gene ID" value="NCU07807"/>
</dbReference>
<dbReference type="GeneID" id="3874540"/>
<dbReference type="KEGG" id="ncr:NCU07807"/>
<dbReference type="VEuPathDB" id="FungiDB:NCU07807"/>
<dbReference type="HOGENOM" id="CLU_036923_1_0_1"/>
<dbReference type="InParanoid" id="P53444"/>
<dbReference type="OMA" id="PRTWGKL"/>
<dbReference type="OrthoDB" id="35652at2759"/>
<dbReference type="UniPathway" id="UPA00109">
    <property type="reaction ID" value="UER00183"/>
</dbReference>
<dbReference type="Proteomes" id="UP000001805">
    <property type="component" value="Chromosome 2, Linkage Group V"/>
</dbReference>
<dbReference type="GO" id="GO:0005829">
    <property type="term" value="C:cytosol"/>
    <property type="evidence" value="ECO:0000318"/>
    <property type="project" value="GO_Central"/>
</dbReference>
<dbReference type="GO" id="GO:0005739">
    <property type="term" value="C:mitochondrion"/>
    <property type="evidence" value="ECO:0007669"/>
    <property type="project" value="EnsemblFungi"/>
</dbReference>
<dbReference type="GO" id="GO:0004332">
    <property type="term" value="F:fructose-bisphosphate aldolase activity"/>
    <property type="evidence" value="ECO:0000318"/>
    <property type="project" value="GO_Central"/>
</dbReference>
<dbReference type="GO" id="GO:1904408">
    <property type="term" value="F:melatonin binding"/>
    <property type="evidence" value="ECO:0007669"/>
    <property type="project" value="EnsemblFungi"/>
</dbReference>
<dbReference type="GO" id="GO:0008270">
    <property type="term" value="F:zinc ion binding"/>
    <property type="evidence" value="ECO:0000318"/>
    <property type="project" value="GO_Central"/>
</dbReference>
<dbReference type="GO" id="GO:0061621">
    <property type="term" value="P:canonical glycolysis"/>
    <property type="evidence" value="ECO:0007669"/>
    <property type="project" value="EnsemblFungi"/>
</dbReference>
<dbReference type="GO" id="GO:0006094">
    <property type="term" value="P:gluconeogenesis"/>
    <property type="evidence" value="ECO:0000318"/>
    <property type="project" value="GO_Central"/>
</dbReference>
<dbReference type="GO" id="GO:0006096">
    <property type="term" value="P:glycolytic process"/>
    <property type="evidence" value="ECO:0000318"/>
    <property type="project" value="GO_Central"/>
</dbReference>
<dbReference type="CDD" id="cd00946">
    <property type="entry name" value="FBP_aldolase_IIA"/>
    <property type="match status" value="1"/>
</dbReference>
<dbReference type="FunFam" id="3.20.20.70:FF:000013">
    <property type="entry name" value="Class II fructose-bisphosphate aldolase"/>
    <property type="match status" value="1"/>
</dbReference>
<dbReference type="Gene3D" id="3.20.20.70">
    <property type="entry name" value="Aldolase class I"/>
    <property type="match status" value="1"/>
</dbReference>
<dbReference type="InterPro" id="IPR013785">
    <property type="entry name" value="Aldolase_TIM"/>
</dbReference>
<dbReference type="InterPro" id="IPR000771">
    <property type="entry name" value="FBA_II"/>
</dbReference>
<dbReference type="InterPro" id="IPR006411">
    <property type="entry name" value="Fruct_bisP_bact"/>
</dbReference>
<dbReference type="NCBIfam" id="TIGR00167">
    <property type="entry name" value="cbbA"/>
    <property type="match status" value="1"/>
</dbReference>
<dbReference type="NCBIfam" id="TIGR01520">
    <property type="entry name" value="FruBisAldo_II_A"/>
    <property type="match status" value="1"/>
</dbReference>
<dbReference type="NCBIfam" id="NF006628">
    <property type="entry name" value="PRK09197.1"/>
    <property type="match status" value="1"/>
</dbReference>
<dbReference type="PANTHER" id="PTHR30559:SF0">
    <property type="entry name" value="FRUCTOSE-BISPHOSPHATE ALDOLASE"/>
    <property type="match status" value="1"/>
</dbReference>
<dbReference type="PANTHER" id="PTHR30559">
    <property type="entry name" value="FRUCTOSE-BISPHOSPHATE ALDOLASE CLASS 2"/>
    <property type="match status" value="1"/>
</dbReference>
<dbReference type="Pfam" id="PF01116">
    <property type="entry name" value="F_bP_aldolase"/>
    <property type="match status" value="1"/>
</dbReference>
<dbReference type="PIRSF" id="PIRSF001359">
    <property type="entry name" value="F_bP_aldolase_II"/>
    <property type="match status" value="1"/>
</dbReference>
<dbReference type="SUPFAM" id="SSF51569">
    <property type="entry name" value="Aldolase"/>
    <property type="match status" value="1"/>
</dbReference>
<dbReference type="PROSITE" id="PS00602">
    <property type="entry name" value="ALDOLASE_CLASS_II_1"/>
    <property type="match status" value="1"/>
</dbReference>
<dbReference type="PROSITE" id="PS00806">
    <property type="entry name" value="ALDOLASE_CLASS_II_2"/>
    <property type="match status" value="1"/>
</dbReference>
<evidence type="ECO:0000250" key="1"/>
<evidence type="ECO:0000305" key="2"/>
<feature type="chain" id="PRO_0000178759" description="Fructose-bisphosphate aldolase">
    <location>
        <begin position="1"/>
        <end position="362"/>
    </location>
</feature>
<feature type="active site" description="Proton donor" evidence="1">
    <location>
        <position position="112"/>
    </location>
</feature>
<feature type="binding site" evidence="1">
    <location>
        <position position="63"/>
    </location>
    <ligand>
        <name>D-glyceraldehyde 3-phosphate</name>
        <dbReference type="ChEBI" id="CHEBI:59776"/>
    </ligand>
</feature>
<feature type="binding site" evidence="1">
    <location>
        <position position="113"/>
    </location>
    <ligand>
        <name>Zn(2+)</name>
        <dbReference type="ChEBI" id="CHEBI:29105"/>
        <label>1</label>
        <note>catalytic</note>
    </ligand>
</feature>
<feature type="binding site" evidence="1">
    <location>
        <position position="147"/>
    </location>
    <ligand>
        <name>Zn(2+)</name>
        <dbReference type="ChEBI" id="CHEBI:29105"/>
        <label>2</label>
    </ligand>
</feature>
<feature type="binding site" evidence="1">
    <location>
        <position position="177"/>
    </location>
    <ligand>
        <name>Zn(2+)</name>
        <dbReference type="ChEBI" id="CHEBI:29105"/>
        <label>2</label>
    </ligand>
</feature>
<feature type="binding site" evidence="1">
    <location>
        <position position="229"/>
    </location>
    <ligand>
        <name>Zn(2+)</name>
        <dbReference type="ChEBI" id="CHEBI:29105"/>
        <label>1</label>
        <note>catalytic</note>
    </ligand>
</feature>
<feature type="binding site" evidence="1">
    <location>
        <position position="230"/>
    </location>
    <ligand>
        <name>dihydroxyacetone phosphate</name>
        <dbReference type="ChEBI" id="CHEBI:57642"/>
    </ligand>
</feature>
<feature type="binding site" evidence="1">
    <location>
        <position position="268"/>
    </location>
    <ligand>
        <name>Zn(2+)</name>
        <dbReference type="ChEBI" id="CHEBI:29105"/>
        <label>1</label>
        <note>catalytic</note>
    </ligand>
</feature>
<feature type="binding site" evidence="1">
    <location>
        <begin position="269"/>
        <end position="271"/>
    </location>
    <ligand>
        <name>dihydroxyacetone phosphate</name>
        <dbReference type="ChEBI" id="CHEBI:57642"/>
    </ligand>
</feature>
<feature type="binding site" evidence="1">
    <location>
        <begin position="290"/>
        <end position="293"/>
    </location>
    <ligand>
        <name>dihydroxyacetone phosphate</name>
        <dbReference type="ChEBI" id="CHEBI:57642"/>
    </ligand>
</feature>
<feature type="sequence conflict" description="In Ref. 1; AAB00930." evidence="2" ref="1">
    <original>MGIFDELNLPAGVLY</original>
    <variation>MRCPIPEHKQNLTFSLPL</variation>
    <location>
        <begin position="1"/>
        <end position="15"/>
    </location>
</feature>
<feature type="sequence conflict" description="In Ref. 1; AAB00930." evidence="2" ref="1">
    <original>II</original>
    <variation>SS</variation>
    <location>
        <begin position="58"/>
        <end position="59"/>
    </location>
</feature>
<feature type="sequence conflict" description="In Ref. 1; AAB00930." evidence="2" ref="1">
    <original>G</original>
    <variation>C</variation>
    <location>
        <position position="66"/>
    </location>
</feature>
<feature type="sequence conflict" description="In Ref. 1; AAB00930." evidence="2" ref="1">
    <original>REA</original>
    <variation>ARD</variation>
    <location>
        <begin position="82"/>
        <end position="84"/>
    </location>
</feature>
<feature type="sequence conflict" description="In Ref. 1; AAB00930." evidence="2" ref="1">
    <original>L</original>
    <variation>RI</variation>
    <location>
        <position position="109"/>
    </location>
</feature>
<feature type="sequence conflict" description="In Ref. 1; AAB00930." evidence="2" ref="1">
    <original>PWLDGML</original>
    <variation>FGDGIP</variation>
    <location>
        <begin position="120"/>
        <end position="126"/>
    </location>
</feature>
<feature type="sequence conflict" description="In Ref. 1; AAB00930." evidence="2" ref="1">
    <original>AF</original>
    <variation>DS</variation>
    <location>
        <begin position="211"/>
        <end position="212"/>
    </location>
</feature>
<feature type="sequence conflict" description="In Ref. 1; AAB00930." evidence="2" ref="1">
    <original>A</original>
    <variation>G</variation>
    <location>
        <position position="222"/>
    </location>
</feature>
<feature type="sequence conflict" description="In Ref. 1; AAB00930." evidence="2" ref="1">
    <original>E</original>
    <variation>D</variation>
    <location>
        <position position="242"/>
    </location>
</feature>
<feature type="sequence conflict" description="In Ref. 1; AAB00930." evidence="2" ref="1">
    <original>H</original>
    <variation>Q</variation>
    <location>
        <position position="247"/>
    </location>
</feature>
<feature type="sequence conflict" description="In Ref. 1; AAB00930." evidence="2" ref="1">
    <original>S</original>
    <variation>P</variation>
    <location>
        <position position="252"/>
    </location>
</feature>
<feature type="sequence conflict" description="In Ref. 1; AAB00930." evidence="2" ref="1">
    <original>V</original>
    <variation>F</variation>
    <location>
        <position position="263"/>
    </location>
</feature>
<feature type="sequence conflict" description="In Ref. 1; AAB00930." evidence="2" ref="1">
    <original>ALKDFNAAG</original>
    <variation>GPQGPSNTTV</variation>
    <location>
        <begin position="352"/>
        <end position="360"/>
    </location>
</feature>